<keyword id="KW-0002">3D-structure</keyword>
<keyword id="KW-0167">Capsid protein</keyword>
<keyword id="KW-1048">Host nucleus</keyword>
<keyword id="KW-1185">Reference proteome</keyword>
<keyword id="KW-0946">Virion</keyword>
<feature type="chain" id="PRO_0000115733" description="Triplex capsid protein 2">
    <location>
        <begin position="1"/>
        <end position="306"/>
    </location>
</feature>
<feature type="strand" evidence="2">
    <location>
        <begin position="7"/>
        <end position="11"/>
    </location>
</feature>
<feature type="helix" evidence="2">
    <location>
        <begin position="18"/>
        <end position="26"/>
    </location>
</feature>
<feature type="turn" evidence="2">
    <location>
        <begin position="27"/>
        <end position="29"/>
    </location>
</feature>
<feature type="strand" evidence="2">
    <location>
        <begin position="30"/>
        <end position="36"/>
    </location>
</feature>
<feature type="strand" evidence="2">
    <location>
        <begin position="39"/>
        <end position="42"/>
    </location>
</feature>
<feature type="helix" evidence="2">
    <location>
        <begin position="43"/>
        <end position="45"/>
    </location>
</feature>
<feature type="strand" evidence="2">
    <location>
        <begin position="46"/>
        <end position="48"/>
    </location>
</feature>
<feature type="turn" evidence="2">
    <location>
        <begin position="49"/>
        <end position="51"/>
    </location>
</feature>
<feature type="strand" evidence="2">
    <location>
        <begin position="54"/>
        <end position="56"/>
    </location>
</feature>
<feature type="helix" evidence="2">
    <location>
        <begin position="58"/>
        <end position="66"/>
    </location>
</feature>
<feature type="strand" evidence="2">
    <location>
        <begin position="68"/>
        <end position="73"/>
    </location>
</feature>
<feature type="strand" evidence="2">
    <location>
        <begin position="91"/>
        <end position="95"/>
    </location>
</feature>
<feature type="strand" evidence="2">
    <location>
        <begin position="107"/>
        <end position="111"/>
    </location>
</feature>
<feature type="strand" evidence="2">
    <location>
        <begin position="136"/>
        <end position="139"/>
    </location>
</feature>
<feature type="helix" evidence="2">
    <location>
        <begin position="140"/>
        <end position="157"/>
    </location>
</feature>
<feature type="helix" evidence="2">
    <location>
        <begin position="162"/>
        <end position="173"/>
    </location>
</feature>
<feature type="strand" evidence="2">
    <location>
        <begin position="174"/>
        <end position="177"/>
    </location>
</feature>
<feature type="strand" evidence="2">
    <location>
        <begin position="180"/>
        <end position="183"/>
    </location>
</feature>
<feature type="helix" evidence="2">
    <location>
        <begin position="191"/>
        <end position="210"/>
    </location>
</feature>
<feature type="helix" evidence="2">
    <location>
        <begin position="213"/>
        <end position="225"/>
    </location>
</feature>
<feature type="helix" evidence="2">
    <location>
        <begin position="229"/>
        <end position="238"/>
    </location>
</feature>
<feature type="turn" evidence="2">
    <location>
        <begin position="239"/>
        <end position="241"/>
    </location>
</feature>
<feature type="helix" evidence="2">
    <location>
        <begin position="261"/>
        <end position="280"/>
    </location>
</feature>
<feature type="strand" evidence="2">
    <location>
        <begin position="288"/>
        <end position="293"/>
    </location>
</feature>
<feature type="strand" evidence="2">
    <location>
        <begin position="297"/>
        <end position="304"/>
    </location>
</feature>
<evidence type="ECO:0000255" key="1">
    <source>
        <dbReference type="HAMAP-Rule" id="MF_04019"/>
    </source>
</evidence>
<evidence type="ECO:0007829" key="2">
    <source>
        <dbReference type="PDB" id="8TES"/>
    </source>
</evidence>
<organism>
    <name type="scientific">Human cytomegalovirus (strain AD169)</name>
    <name type="common">HHV-5</name>
    <name type="synonym">Human herpesvirus 5</name>
    <dbReference type="NCBI Taxonomy" id="10360"/>
    <lineage>
        <taxon>Viruses</taxon>
        <taxon>Duplodnaviria</taxon>
        <taxon>Heunggongvirae</taxon>
        <taxon>Peploviricota</taxon>
        <taxon>Herviviricetes</taxon>
        <taxon>Herpesvirales</taxon>
        <taxon>Orthoherpesviridae</taxon>
        <taxon>Betaherpesvirinae</taxon>
        <taxon>Cytomegalovirus</taxon>
        <taxon>Cytomegalovirus humanbeta5</taxon>
        <taxon>Human cytomegalovirus</taxon>
    </lineage>
</organism>
<accession>P16728</accession>
<accession>Q7M6K6</accession>
<gene>
    <name evidence="1" type="primary">TRX2</name>
    <name type="ordered locus">UL85</name>
</gene>
<name>TRX2_HCMVA</name>
<protein>
    <recommendedName>
        <fullName evidence="1">Triplex capsid protein 2</fullName>
    </recommendedName>
</protein>
<organismHost>
    <name type="scientific">Homo sapiens</name>
    <name type="common">Human</name>
    <dbReference type="NCBI Taxonomy" id="9606"/>
</organismHost>
<sequence length="306" mass="34595">MAAMEANIFCTFDHKLSIADVGKLTKLVAAVVPIPQRLHLIKHYQLGLHQFVDHTRGYVRLRGLLRNMTLTLMRRVEGNQILLHVPTHGLLYTVLNTGPVTWEKGDALCVLPPLFHGPLARENLLTLGQWELVLPWIVPMPLALEINQRLLIMGLFSLDRSYEEVKAAVQQLQTITFRDATFTIPDPVIDQHLLIDMKTACLSMSMVANLASELTMTYVRKLALEDSSMLLVKCQELLMRLDRERSVGEPRTPARPQHVSPDDEIARLSALFVMLRQLDDLIREQVVFTVCDVSPDNKSATCIFKG</sequence>
<reference key="1">
    <citation type="journal article" date="1990" name="Curr. Top. Microbiol. Immunol.">
        <title>Analysis of the protein-coding content of the sequence of human cytomegalovirus strain AD169.</title>
        <authorList>
            <person name="Chee M.S."/>
            <person name="Bankier A.T."/>
            <person name="Beck S."/>
            <person name="Bohni R."/>
            <person name="Brown C.M."/>
            <person name="Cerny R."/>
            <person name="Horsnell T."/>
            <person name="Hutchison C.A. III"/>
            <person name="Kouzarides T."/>
            <person name="Martignetti J.A."/>
            <person name="Preddie E."/>
            <person name="Satchwell S.C."/>
            <person name="Tomlinson P."/>
            <person name="Weston K.M."/>
            <person name="Barrell B.G."/>
        </authorList>
    </citation>
    <scope>NUCLEOTIDE SEQUENCE [LARGE SCALE GENOMIC DNA]</scope>
</reference>
<reference key="2">
    <citation type="journal article" date="2003" name="J. Gen. Virol.">
        <title>The human cytomegalovirus genome revisited: comparison with the chimpanzee cytomegalovirus genome.</title>
        <authorList>
            <person name="Davison A.J."/>
            <person name="Dolan A."/>
            <person name="Akter P."/>
            <person name="Addison C."/>
            <person name="Dargan D.J."/>
            <person name="Alcendor D.J."/>
            <person name="McGeoch D.J."/>
            <person name="Hayward G.S."/>
        </authorList>
    </citation>
    <scope>GENOME REANNOTATION</scope>
</reference>
<reference key="3">
    <citation type="journal article" date="2003" name="J. Gen. Virol.">
        <authorList>
            <person name="Davison A.J."/>
            <person name="Dolan A."/>
            <person name="Akter P."/>
            <person name="Addison C."/>
            <person name="Dargan D.J."/>
            <person name="Alcendor D.J."/>
            <person name="McGeoch D.J."/>
            <person name="Hayward G.S."/>
        </authorList>
    </citation>
    <scope>ERRATUM OF PUBMED:12533697</scope>
</reference>
<reference key="4">
    <citation type="journal article" date="2004" name="J. Virol.">
        <title>Identification of proteins in human cytomegalovirus (HCMV) particles: the HCMV proteome.</title>
        <authorList>
            <person name="Varnum S.M."/>
            <person name="Streblow D.N."/>
            <person name="Monroe M.E."/>
            <person name="Smith P."/>
            <person name="Auberry K.J."/>
            <person name="Pasa-Tolic L."/>
            <person name="Wang D."/>
            <person name="Camp D.G. II"/>
            <person name="Rodland K."/>
            <person name="Wiley S."/>
            <person name="Britt W."/>
            <person name="Shenk T."/>
            <person name="Smith R.D."/>
            <person name="Nelson J.A."/>
        </authorList>
    </citation>
    <scope>IDENTIFICATION</scope>
</reference>
<reference key="5">
    <citation type="journal article" date="2004" name="J. Virol.">
        <authorList>
            <person name="Varnum S.M."/>
            <person name="Streblow D.N."/>
            <person name="Monroe M.E."/>
            <person name="Smith P."/>
            <person name="Auberry K.J."/>
            <person name="Pasa-Tolic L."/>
            <person name="Wang D."/>
            <person name="Camp D.G. II"/>
            <person name="Rodland K."/>
            <person name="Wiley S."/>
            <person name="Britt W."/>
            <person name="Shenk T."/>
            <person name="Smith R.D."/>
            <person name="Nelson J.A."/>
        </authorList>
    </citation>
    <scope>ERRATUM OF PUBMED:15452216</scope>
</reference>
<proteinExistence type="evidence at protein level"/>
<comment type="function">
    <text evidence="1">Structural component of the T=16 icosahedral capsid. The capsid is composed of pentamers and hexamers of major capsid protein/MCP, which are linked together by heterotrimers called triplexes. These triplexes are formed by a single molecule of triplex protein 1/TRX1 and two copies of triplex protein 2/TRX2. Additionally, TRX1 is required for efficient transport of TRX2 to the nucleus, which is the site of capsid assembly.</text>
</comment>
<comment type="subunit">
    <text evidence="1">Interacts with TRX1 and major capisd protein/MCP.</text>
</comment>
<comment type="subcellular location">
    <subcellularLocation>
        <location evidence="1">Virion</location>
    </subcellularLocation>
    <subcellularLocation>
        <location evidence="1">Host nucleus</location>
    </subcellularLocation>
</comment>
<comment type="similarity">
    <text evidence="1">Belongs to the herpesviridae TRX2 protein family.</text>
</comment>
<dbReference type="EMBL" id="X17403">
    <property type="protein sequence ID" value="CAA35359.1"/>
    <property type="molecule type" value="Genomic_DNA"/>
</dbReference>
<dbReference type="EMBL" id="BK000394">
    <property type="protein sequence ID" value="DAA00182.1"/>
    <property type="molecule type" value="Genomic_DNA"/>
</dbReference>
<dbReference type="PIR" id="S09849">
    <property type="entry name" value="S09849"/>
</dbReference>
<dbReference type="RefSeq" id="YP_081533.1">
    <property type="nucleotide sequence ID" value="NC_006273.2"/>
</dbReference>
<dbReference type="PDB" id="5VKU">
    <property type="method" value="EM"/>
    <property type="resolution" value="3.90 A"/>
    <property type="chains" value="h/i/k/l/n/o/q/r/t/u=1-306"/>
</dbReference>
<dbReference type="PDB" id="7ET3">
    <property type="method" value="EM"/>
    <property type="resolution" value="4.20 A"/>
    <property type="chains" value="I/h/n/o=1-306"/>
</dbReference>
<dbReference type="PDB" id="7LIV">
    <property type="method" value="EM"/>
    <property type="resolution" value="3.60 A"/>
    <property type="chains" value="q/r=1-306"/>
</dbReference>
<dbReference type="PDB" id="8TEP">
    <property type="method" value="EM"/>
    <property type="resolution" value="3.50 A"/>
    <property type="chains" value="U/V/X/Y=1-306"/>
</dbReference>
<dbReference type="PDB" id="8TES">
    <property type="method" value="EM"/>
    <property type="resolution" value="3.27 A"/>
    <property type="chains" value="U/V/X/Y=1-306"/>
</dbReference>
<dbReference type="PDB" id="8TET">
    <property type="method" value="EM"/>
    <property type="resolution" value="4.26 A"/>
    <property type="chains" value="U/V/X/Y=1-306"/>
</dbReference>
<dbReference type="PDB" id="8TEU">
    <property type="method" value="EM"/>
    <property type="resolution" value="4.01 A"/>
    <property type="chains" value="U/V/X/Y=1-306"/>
</dbReference>
<dbReference type="PDB" id="8TEW">
    <property type="method" value="EM"/>
    <property type="resolution" value="3.02 A"/>
    <property type="chains" value="U/V/X/Y=1-306"/>
</dbReference>
<dbReference type="PDBsum" id="5VKU"/>
<dbReference type="PDBsum" id="7ET3"/>
<dbReference type="PDBsum" id="7LIV"/>
<dbReference type="PDBsum" id="8TEP"/>
<dbReference type="PDBsum" id="8TES"/>
<dbReference type="PDBsum" id="8TET"/>
<dbReference type="PDBsum" id="8TEU"/>
<dbReference type="PDBsum" id="8TEW"/>
<dbReference type="EMDB" id="EMD-23386"/>
<dbReference type="EMDB" id="EMD-41194"/>
<dbReference type="EMDB" id="EMD-41200"/>
<dbReference type="EMDB" id="EMD-41201"/>
<dbReference type="EMDB" id="EMD-41202"/>
<dbReference type="EMDB" id="EMD-41204"/>
<dbReference type="EMDB" id="EMD-44639"/>
<dbReference type="EMDB" id="EMD-44640"/>
<dbReference type="EMDB" id="EMD-44648"/>
<dbReference type="EMDB" id="EMD-8703"/>
<dbReference type="SMR" id="P16728"/>
<dbReference type="BioGRID" id="1678069">
    <property type="interactions" value="1"/>
</dbReference>
<dbReference type="IntAct" id="P16728">
    <property type="interactions" value="1"/>
</dbReference>
<dbReference type="GeneID" id="3077516"/>
<dbReference type="KEGG" id="vg:3077516"/>
<dbReference type="Proteomes" id="UP000008991">
    <property type="component" value="Segment"/>
</dbReference>
<dbReference type="Proteomes" id="UP000008992">
    <property type="component" value="Segment"/>
</dbReference>
<dbReference type="GO" id="GO:0042025">
    <property type="term" value="C:host cell nucleus"/>
    <property type="evidence" value="ECO:0007669"/>
    <property type="project" value="UniProtKB-SubCell"/>
</dbReference>
<dbReference type="GO" id="GO:0019028">
    <property type="term" value="C:viral capsid"/>
    <property type="evidence" value="ECO:0007669"/>
    <property type="project" value="UniProtKB-KW"/>
</dbReference>
<dbReference type="GO" id="GO:0005198">
    <property type="term" value="F:structural molecule activity"/>
    <property type="evidence" value="ECO:0007669"/>
    <property type="project" value="InterPro"/>
</dbReference>
<dbReference type="HAMAP" id="MF_04019">
    <property type="entry name" value="HSV_TRX2"/>
    <property type="match status" value="1"/>
</dbReference>
<dbReference type="InterPro" id="IPR002690">
    <property type="entry name" value="Herpes_capsid_2"/>
</dbReference>
<dbReference type="Pfam" id="PF01802">
    <property type="entry name" value="Herpes_V23"/>
    <property type="match status" value="1"/>
</dbReference>